<gene>
    <name evidence="1" type="primary">psbF</name>
</gene>
<proteinExistence type="evidence at transcript level"/>
<comment type="function">
    <text evidence="1">This b-type cytochrome is tightly associated with the reaction center of photosystem II (PSII). PSII is a light-driven water:plastoquinone oxidoreductase that uses light energy to abstract electrons from H(2)O, generating O(2) and a proton gradient subsequently used for ATP formation. It consists of a core antenna complex that captures photons, and an electron transfer chain that converts photonic excitation into a charge separation.</text>
</comment>
<comment type="cofactor">
    <cofactor evidence="1">
        <name>heme b</name>
        <dbReference type="ChEBI" id="CHEBI:60344"/>
    </cofactor>
    <text evidence="1">With its partner (PsbE) binds heme. PSII binds additional chlorophylls, carotenoids and specific lipids.</text>
</comment>
<comment type="subunit">
    <text evidence="1">Heterodimer of an alpha subunit and a beta subunit. PSII is composed of 1 copy each of membrane proteins PsbA, PsbB, PsbC, PsbD, PsbE, PsbF, PsbH, PsbI, PsbJ, PsbK, PsbL, PsbM, PsbT, PsbX, PsbY, PsbZ, Psb30/Ycf12, at least 3 peripheral proteins of the oxygen-evolving complex and a large number of cofactors. It forms dimeric complexes.</text>
</comment>
<comment type="subcellular location">
    <subcellularLocation>
        <location evidence="1">Plastid</location>
        <location evidence="1">Chloroplast thylakoid membrane</location>
        <topology evidence="1">Single-pass membrane protein</topology>
    </subcellularLocation>
</comment>
<comment type="RNA editing">
    <location>
        <position position="26" evidence="2"/>
    </location>
</comment>
<comment type="similarity">
    <text evidence="1">Belongs to the PsbE/PsbF family.</text>
</comment>
<keyword id="KW-0150">Chloroplast</keyword>
<keyword id="KW-0249">Electron transport</keyword>
<keyword id="KW-0349">Heme</keyword>
<keyword id="KW-0408">Iron</keyword>
<keyword id="KW-0472">Membrane</keyword>
<keyword id="KW-0479">Metal-binding</keyword>
<keyword id="KW-0602">Photosynthesis</keyword>
<keyword id="KW-0604">Photosystem II</keyword>
<keyword id="KW-0934">Plastid</keyword>
<keyword id="KW-0691">RNA editing</keyword>
<keyword id="KW-0793">Thylakoid</keyword>
<keyword id="KW-0812">Transmembrane</keyword>
<keyword id="KW-1133">Transmembrane helix</keyword>
<keyword id="KW-0813">Transport</keyword>
<protein>
    <recommendedName>
        <fullName evidence="1">Cytochrome b559 subunit beta</fullName>
    </recommendedName>
    <alternativeName>
        <fullName evidence="1">PSII reaction center subunit VI</fullName>
    </alternativeName>
</protein>
<organism>
    <name type="scientific">Ginkgo biloba</name>
    <name type="common">Ginkgo</name>
    <name type="synonym">Maidenhair tree</name>
    <dbReference type="NCBI Taxonomy" id="3311"/>
    <lineage>
        <taxon>Eukaryota</taxon>
        <taxon>Viridiplantae</taxon>
        <taxon>Streptophyta</taxon>
        <taxon>Embryophyta</taxon>
        <taxon>Tracheophyta</taxon>
        <taxon>Spermatophyta</taxon>
        <taxon>Ginkgoidae</taxon>
        <taxon>Ginkgoales</taxon>
        <taxon>Ginkgoaceae</taxon>
        <taxon>Ginkgo</taxon>
    </lineage>
</organism>
<feature type="chain" id="PRO_0000200392" description="Cytochrome b559 subunit beta">
    <location>
        <begin position="1"/>
        <end position="39"/>
    </location>
</feature>
<feature type="transmembrane region" description="Helical" evidence="1">
    <location>
        <begin position="14"/>
        <end position="30"/>
    </location>
</feature>
<feature type="binding site" description="axial binding residue" evidence="1">
    <location>
        <position position="18"/>
    </location>
    <ligand>
        <name>heme</name>
        <dbReference type="ChEBI" id="CHEBI:30413"/>
        <note>ligand shared with alpha subunit</note>
    </ligand>
    <ligandPart>
        <name>Fe</name>
        <dbReference type="ChEBI" id="CHEBI:18248"/>
    </ligandPart>
</feature>
<evidence type="ECO:0000255" key="1">
    <source>
        <dbReference type="HAMAP-Rule" id="MF_00643"/>
    </source>
</evidence>
<evidence type="ECO:0000269" key="2">
    <source>
    </source>
</evidence>
<sequence>MTIDRTYPIFTVRWLAVHGLAVPTVSFLGSISAMQFIQR</sequence>
<dbReference type="EMBL" id="AF123836">
    <property type="protein sequence ID" value="AAG26223.1"/>
    <property type="molecule type" value="Genomic_DNA"/>
</dbReference>
<dbReference type="EMBL" id="AJ130891">
    <property type="protein sequence ID" value="CAB61492.1"/>
    <property type="molecule type" value="Genomic_DNA"/>
</dbReference>
<dbReference type="RefSeq" id="YP_005352723.1">
    <property type="nucleotide sequence ID" value="NC_016986.1"/>
</dbReference>
<dbReference type="SMR" id="Q7J1B1"/>
<dbReference type="GeneID" id="11935021"/>
<dbReference type="GO" id="GO:0009535">
    <property type="term" value="C:chloroplast thylakoid membrane"/>
    <property type="evidence" value="ECO:0007669"/>
    <property type="project" value="UniProtKB-SubCell"/>
</dbReference>
<dbReference type="GO" id="GO:0009539">
    <property type="term" value="C:photosystem II reaction center"/>
    <property type="evidence" value="ECO:0007669"/>
    <property type="project" value="InterPro"/>
</dbReference>
<dbReference type="GO" id="GO:0009055">
    <property type="term" value="F:electron transfer activity"/>
    <property type="evidence" value="ECO:0007669"/>
    <property type="project" value="UniProtKB-UniRule"/>
</dbReference>
<dbReference type="GO" id="GO:0020037">
    <property type="term" value="F:heme binding"/>
    <property type="evidence" value="ECO:0007669"/>
    <property type="project" value="InterPro"/>
</dbReference>
<dbReference type="GO" id="GO:0005506">
    <property type="term" value="F:iron ion binding"/>
    <property type="evidence" value="ECO:0007669"/>
    <property type="project" value="UniProtKB-UniRule"/>
</dbReference>
<dbReference type="GO" id="GO:0009767">
    <property type="term" value="P:photosynthetic electron transport chain"/>
    <property type="evidence" value="ECO:0007669"/>
    <property type="project" value="InterPro"/>
</dbReference>
<dbReference type="HAMAP" id="MF_00643">
    <property type="entry name" value="PSII_PsbF"/>
    <property type="match status" value="1"/>
</dbReference>
<dbReference type="InterPro" id="IPR006241">
    <property type="entry name" value="PSII_cyt_b559_bsu"/>
</dbReference>
<dbReference type="InterPro" id="IPR006216">
    <property type="entry name" value="PSII_cyt_b559_CS"/>
</dbReference>
<dbReference type="InterPro" id="IPR013081">
    <property type="entry name" value="PSII_cyt_b559_N"/>
</dbReference>
<dbReference type="NCBIfam" id="TIGR01333">
    <property type="entry name" value="cyt_b559_beta"/>
    <property type="match status" value="1"/>
</dbReference>
<dbReference type="Pfam" id="PF00283">
    <property type="entry name" value="Cytochrom_B559"/>
    <property type="match status" value="1"/>
</dbReference>
<dbReference type="PIRSF" id="PIRSF000037">
    <property type="entry name" value="PsbF"/>
    <property type="match status" value="1"/>
</dbReference>
<dbReference type="SUPFAM" id="SSF161045">
    <property type="entry name" value="Cytochrome b559 subunits"/>
    <property type="match status" value="1"/>
</dbReference>
<dbReference type="PROSITE" id="PS00537">
    <property type="entry name" value="CYTOCHROME_B559"/>
    <property type="match status" value="1"/>
</dbReference>
<name>PSBF_GINBI</name>
<geneLocation type="chloroplast"/>
<accession>Q7J1B1</accession>
<reference key="1">
    <citation type="journal article" date="2000" name="Am. J. Bot.">
        <title>Utility of 17 chloroplast genes for inferring the phylogeny of the basal angiosperms.</title>
        <authorList>
            <person name="Graham S.W."/>
            <person name="Olmstead R.G."/>
        </authorList>
    </citation>
    <scope>NUCLEOTIDE SEQUENCE [GENOMIC DNA]</scope>
</reference>
<reference key="2">
    <citation type="journal article" date="1999" name="Gene">
        <title>RNA editing in an untranslated region of the Ginkgo chloroplast genome.</title>
        <authorList>
            <person name="Kudla J."/>
            <person name="Bock R."/>
        </authorList>
    </citation>
    <scope>NUCLEOTIDE SEQUENCE [GENOMIC DNA]</scope>
    <scope>RNA EDITING OF POSITION 26</scope>
</reference>